<feature type="chain" id="PRO_0000023101" description="Aspartate 1-decarboxylase beta chain" evidence="1">
    <location>
        <begin position="1"/>
        <end position="24"/>
    </location>
</feature>
<feature type="chain" id="PRO_0000023102" description="Aspartate 1-decarboxylase alpha chain" evidence="1">
    <location>
        <begin position="25"/>
        <end position="116"/>
    </location>
</feature>
<feature type="active site" description="Schiff-base intermediate with substrate; via pyruvic acid" evidence="1">
    <location>
        <position position="25"/>
    </location>
</feature>
<feature type="active site" description="Proton donor" evidence="1">
    <location>
        <position position="58"/>
    </location>
</feature>
<feature type="binding site" evidence="1">
    <location>
        <position position="57"/>
    </location>
    <ligand>
        <name>substrate</name>
    </ligand>
</feature>
<feature type="binding site" evidence="1">
    <location>
        <begin position="73"/>
        <end position="75"/>
    </location>
    <ligand>
        <name>substrate</name>
    </ligand>
</feature>
<feature type="modified residue" description="Pyruvic acid (Ser)" evidence="1">
    <location>
        <position position="25"/>
    </location>
</feature>
<keyword id="KW-0068">Autocatalytic cleavage</keyword>
<keyword id="KW-0963">Cytoplasm</keyword>
<keyword id="KW-0210">Decarboxylase</keyword>
<keyword id="KW-0456">Lyase</keyword>
<keyword id="KW-0566">Pantothenate biosynthesis</keyword>
<keyword id="KW-0670">Pyruvate</keyword>
<keyword id="KW-0704">Schiff base</keyword>
<keyword id="KW-0865">Zymogen</keyword>
<name>PAND_LEPIC</name>
<organism>
    <name type="scientific">Leptospira interrogans serogroup Icterohaemorrhagiae serovar copenhageni (strain Fiocruz L1-130)</name>
    <dbReference type="NCBI Taxonomy" id="267671"/>
    <lineage>
        <taxon>Bacteria</taxon>
        <taxon>Pseudomonadati</taxon>
        <taxon>Spirochaetota</taxon>
        <taxon>Spirochaetia</taxon>
        <taxon>Leptospirales</taxon>
        <taxon>Leptospiraceae</taxon>
        <taxon>Leptospira</taxon>
    </lineage>
</organism>
<accession>Q72QN9</accession>
<evidence type="ECO:0000255" key="1">
    <source>
        <dbReference type="HAMAP-Rule" id="MF_00446"/>
    </source>
</evidence>
<sequence length="116" mass="12834">MQITVMKGKIHRATVTDADLNYEGSLTVDMDLVDAAGMRVYEKVSVVNVNNGARFETYIIEGKRGSGEICLNGAAARLGMKGDKIIIITYAQVEEKELASDYTPKVVHVDEKNRKR</sequence>
<gene>
    <name evidence="1" type="primary">panD</name>
    <name type="ordered locus">LIC_12074</name>
</gene>
<reference key="1">
    <citation type="journal article" date="2004" name="J. Bacteriol.">
        <title>Comparative genomics of two Leptospira interrogans serovars reveals novel insights into physiology and pathogenesis.</title>
        <authorList>
            <person name="Nascimento A.L.T.O."/>
            <person name="Ko A.I."/>
            <person name="Martins E.A.L."/>
            <person name="Monteiro-Vitorello C.B."/>
            <person name="Ho P.L."/>
            <person name="Haake D.A."/>
            <person name="Verjovski-Almeida S."/>
            <person name="Hartskeerl R.A."/>
            <person name="Marques M.V."/>
            <person name="Oliveira M.C."/>
            <person name="Menck C.F.M."/>
            <person name="Leite L.C.C."/>
            <person name="Carrer H."/>
            <person name="Coutinho L.L."/>
            <person name="Degrave W.M."/>
            <person name="Dellagostin O.A."/>
            <person name="El-Dorry H."/>
            <person name="Ferro E.S."/>
            <person name="Ferro M.I.T."/>
            <person name="Furlan L.R."/>
            <person name="Gamberini M."/>
            <person name="Giglioti E.A."/>
            <person name="Goes-Neto A."/>
            <person name="Goldman G.H."/>
            <person name="Goldman M.H.S."/>
            <person name="Harakava R."/>
            <person name="Jeronimo S.M.B."/>
            <person name="Junqueira-de-Azevedo I.L.M."/>
            <person name="Kimura E.T."/>
            <person name="Kuramae E.E."/>
            <person name="Lemos E.G.M."/>
            <person name="Lemos M.V.F."/>
            <person name="Marino C.L."/>
            <person name="Nunes L.R."/>
            <person name="de Oliveira R.C."/>
            <person name="Pereira G.G."/>
            <person name="Reis M.S."/>
            <person name="Schriefer A."/>
            <person name="Siqueira W.J."/>
            <person name="Sommer P."/>
            <person name="Tsai S.M."/>
            <person name="Simpson A.J.G."/>
            <person name="Ferro J.A."/>
            <person name="Camargo L.E.A."/>
            <person name="Kitajima J.P."/>
            <person name="Setubal J.C."/>
            <person name="Van Sluys M.A."/>
        </authorList>
    </citation>
    <scope>NUCLEOTIDE SEQUENCE [LARGE SCALE GENOMIC DNA]</scope>
    <source>
        <strain>Fiocruz L1-130</strain>
    </source>
</reference>
<comment type="function">
    <text evidence="1">Catalyzes the pyruvoyl-dependent decarboxylation of aspartate to produce beta-alanine.</text>
</comment>
<comment type="catalytic activity">
    <reaction evidence="1">
        <text>L-aspartate + H(+) = beta-alanine + CO2</text>
        <dbReference type="Rhea" id="RHEA:19497"/>
        <dbReference type="ChEBI" id="CHEBI:15378"/>
        <dbReference type="ChEBI" id="CHEBI:16526"/>
        <dbReference type="ChEBI" id="CHEBI:29991"/>
        <dbReference type="ChEBI" id="CHEBI:57966"/>
        <dbReference type="EC" id="4.1.1.11"/>
    </reaction>
</comment>
<comment type="cofactor">
    <cofactor evidence="1">
        <name>pyruvate</name>
        <dbReference type="ChEBI" id="CHEBI:15361"/>
    </cofactor>
    <text evidence="1">Binds 1 pyruvoyl group covalently per subunit.</text>
</comment>
<comment type="pathway">
    <text evidence="1">Cofactor biosynthesis; (R)-pantothenate biosynthesis; beta-alanine from L-aspartate: step 1/1.</text>
</comment>
<comment type="subunit">
    <text evidence="1">Heterooctamer of four alpha and four beta subunits.</text>
</comment>
<comment type="subcellular location">
    <subcellularLocation>
        <location evidence="1">Cytoplasm</location>
    </subcellularLocation>
</comment>
<comment type="PTM">
    <text evidence="1">Is synthesized initially as an inactive proenzyme, which is activated by self-cleavage at a specific serine bond to produce a beta-subunit with a hydroxyl group at its C-terminus and an alpha-subunit with a pyruvoyl group at its N-terminus.</text>
</comment>
<comment type="similarity">
    <text evidence="1">Belongs to the PanD family.</text>
</comment>
<proteinExistence type="inferred from homology"/>
<dbReference type="EC" id="4.1.1.11" evidence="1"/>
<dbReference type="EMBL" id="AE016823">
    <property type="protein sequence ID" value="AAS70645.1"/>
    <property type="molecule type" value="Genomic_DNA"/>
</dbReference>
<dbReference type="SMR" id="Q72QN9"/>
<dbReference type="KEGG" id="lic:LIC_12074"/>
<dbReference type="HOGENOM" id="CLU_115305_2_0_12"/>
<dbReference type="UniPathway" id="UPA00028">
    <property type="reaction ID" value="UER00002"/>
</dbReference>
<dbReference type="Proteomes" id="UP000007037">
    <property type="component" value="Chromosome I"/>
</dbReference>
<dbReference type="GO" id="GO:0005829">
    <property type="term" value="C:cytosol"/>
    <property type="evidence" value="ECO:0007669"/>
    <property type="project" value="TreeGrafter"/>
</dbReference>
<dbReference type="GO" id="GO:0004068">
    <property type="term" value="F:aspartate 1-decarboxylase activity"/>
    <property type="evidence" value="ECO:0007669"/>
    <property type="project" value="UniProtKB-UniRule"/>
</dbReference>
<dbReference type="GO" id="GO:0006523">
    <property type="term" value="P:alanine biosynthetic process"/>
    <property type="evidence" value="ECO:0007669"/>
    <property type="project" value="InterPro"/>
</dbReference>
<dbReference type="GO" id="GO:0015940">
    <property type="term" value="P:pantothenate biosynthetic process"/>
    <property type="evidence" value="ECO:0007669"/>
    <property type="project" value="UniProtKB-UniRule"/>
</dbReference>
<dbReference type="CDD" id="cd06919">
    <property type="entry name" value="Asp_decarbox"/>
    <property type="match status" value="1"/>
</dbReference>
<dbReference type="Gene3D" id="2.40.40.20">
    <property type="match status" value="1"/>
</dbReference>
<dbReference type="HAMAP" id="MF_00446">
    <property type="entry name" value="PanD"/>
    <property type="match status" value="1"/>
</dbReference>
<dbReference type="InterPro" id="IPR009010">
    <property type="entry name" value="Asp_de-COase-like_dom_sf"/>
</dbReference>
<dbReference type="InterPro" id="IPR003190">
    <property type="entry name" value="Asp_decarbox"/>
</dbReference>
<dbReference type="NCBIfam" id="TIGR00223">
    <property type="entry name" value="panD"/>
    <property type="match status" value="1"/>
</dbReference>
<dbReference type="PANTHER" id="PTHR21012">
    <property type="entry name" value="ASPARTATE 1-DECARBOXYLASE"/>
    <property type="match status" value="1"/>
</dbReference>
<dbReference type="PANTHER" id="PTHR21012:SF0">
    <property type="entry name" value="ASPARTATE 1-DECARBOXYLASE"/>
    <property type="match status" value="1"/>
</dbReference>
<dbReference type="Pfam" id="PF02261">
    <property type="entry name" value="Asp_decarbox"/>
    <property type="match status" value="1"/>
</dbReference>
<dbReference type="PIRSF" id="PIRSF006246">
    <property type="entry name" value="Asp_decarbox"/>
    <property type="match status" value="1"/>
</dbReference>
<dbReference type="SUPFAM" id="SSF50692">
    <property type="entry name" value="ADC-like"/>
    <property type="match status" value="1"/>
</dbReference>
<protein>
    <recommendedName>
        <fullName evidence="1">Aspartate 1-decarboxylase</fullName>
        <ecNumber evidence="1">4.1.1.11</ecNumber>
    </recommendedName>
    <alternativeName>
        <fullName evidence="1">Aspartate alpha-decarboxylase</fullName>
    </alternativeName>
    <component>
        <recommendedName>
            <fullName evidence="1">Aspartate 1-decarboxylase beta chain</fullName>
        </recommendedName>
    </component>
    <component>
        <recommendedName>
            <fullName evidence="1">Aspartate 1-decarboxylase alpha chain</fullName>
        </recommendedName>
    </component>
</protein>